<dbReference type="EMBL" id="AF074612">
    <property type="protein sequence ID" value="AAC69832.1"/>
    <property type="molecule type" value="Genomic_DNA"/>
</dbReference>
<dbReference type="EMBL" id="AL117189">
    <property type="protein sequence ID" value="CAB54898.1"/>
    <property type="molecule type" value="Genomic_DNA"/>
</dbReference>
<dbReference type="EMBL" id="AE017043">
    <property type="protein sequence ID" value="AAS58581.1"/>
    <property type="molecule type" value="Genomic_DNA"/>
</dbReference>
<dbReference type="PIR" id="T42900">
    <property type="entry name" value="T42900"/>
</dbReference>
<dbReference type="RefSeq" id="NP_395156.1">
    <property type="nucleotide sequence ID" value="NC_003131.1"/>
</dbReference>
<dbReference type="RefSeq" id="NP_857957.1">
    <property type="nucleotide sequence ID" value="NC_004839.1"/>
</dbReference>
<dbReference type="RefSeq" id="WP_002213004.1">
    <property type="nucleotide sequence ID" value="NZ_WUCM01000119.1"/>
</dbReference>
<dbReference type="SMR" id="Q9ZGW6"/>
<dbReference type="IntAct" id="Q9ZGW6">
    <property type="interactions" value="2"/>
</dbReference>
<dbReference type="MINT" id="Q9ZGW6"/>
<dbReference type="PaxDb" id="214092-5832442"/>
<dbReference type="DNASU" id="1149321"/>
<dbReference type="EnsemblBacteria" id="AAS58581">
    <property type="protein sequence ID" value="AAS58581"/>
    <property type="gene ID" value="YP_pCD66"/>
</dbReference>
<dbReference type="KEGG" id="ype:YPCD1.21"/>
<dbReference type="KEGG" id="ypm:YP_pCD66"/>
<dbReference type="PATRIC" id="fig|214092.21.peg.25"/>
<dbReference type="eggNOG" id="ENOG50342IE">
    <property type="taxonomic scope" value="Bacteria"/>
</dbReference>
<dbReference type="HOGENOM" id="CLU_159405_0_0_6"/>
<dbReference type="OMA" id="THQNEEW"/>
<dbReference type="OrthoDB" id="5587179at2"/>
<dbReference type="PRO" id="PR:Q9ZGW6"/>
<dbReference type="Proteomes" id="UP000000815">
    <property type="component" value="Plasmid pCD1"/>
</dbReference>
<dbReference type="Proteomes" id="UP000001019">
    <property type="component" value="Plasmid pCD1"/>
</dbReference>
<dbReference type="GO" id="GO:0030254">
    <property type="term" value="P:protein secretion by the type III secretion system"/>
    <property type="evidence" value="ECO:0007669"/>
    <property type="project" value="InterPro"/>
</dbReference>
<dbReference type="CDD" id="cd17032">
    <property type="entry name" value="T3SC_IA_SycT-like"/>
    <property type="match status" value="1"/>
</dbReference>
<dbReference type="Gene3D" id="3.30.1460.10">
    <property type="match status" value="1"/>
</dbReference>
<dbReference type="InterPro" id="IPR010261">
    <property type="entry name" value="Tir_chaperone"/>
</dbReference>
<dbReference type="Pfam" id="PF05932">
    <property type="entry name" value="CesT"/>
    <property type="match status" value="1"/>
</dbReference>
<dbReference type="SUPFAM" id="SSF69635">
    <property type="entry name" value="Type III secretory system chaperone-like"/>
    <property type="match status" value="1"/>
</dbReference>
<sequence length="132" mass="15416">MQTTFTELMQQLFLKLGLNHQVNENDVYTFTFEVDGHIQVLIACYHQQWVQLFSELGADLPTNDNLFGEHWPAHVQGRLDGKPILWSQQSLVGLDIDEMQAWLERFIDDIEQRKEPQNTKFQPNSTSPILFI</sequence>
<geneLocation type="plasmid">
    <name>pCD1</name>
</geneLocation>
<reference key="1">
    <citation type="journal article" date="1998" name="Infect. Immun.">
        <title>DNA sequencing and analysis of the low-Ca2+-response plasmid pCD1 of Yersinia pestis KIM5.</title>
        <authorList>
            <person name="Perry R.D."/>
            <person name="Straley S.C."/>
            <person name="Fetherston J.D."/>
            <person name="Rose D.J."/>
            <person name="Gregor J."/>
            <person name="Blattner F.R."/>
        </authorList>
    </citation>
    <scope>NUCLEOTIDE SEQUENCE [GENOMIC DNA]</scope>
    <source>
        <strain>KIM5 / Biovar Mediaevalis</strain>
    </source>
</reference>
<reference key="2">
    <citation type="journal article" date="2001" name="Nature">
        <title>Genome sequence of Yersinia pestis, the causative agent of plague.</title>
        <authorList>
            <person name="Parkhill J."/>
            <person name="Wren B.W."/>
            <person name="Thomson N.R."/>
            <person name="Titball R.W."/>
            <person name="Holden M.T.G."/>
            <person name="Prentice M.B."/>
            <person name="Sebaihia M."/>
            <person name="James K.D."/>
            <person name="Churcher C.M."/>
            <person name="Mungall K.L."/>
            <person name="Baker S."/>
            <person name="Basham D."/>
            <person name="Bentley S.D."/>
            <person name="Brooks K."/>
            <person name="Cerdeno-Tarraga A.-M."/>
            <person name="Chillingworth T."/>
            <person name="Cronin A."/>
            <person name="Davies R.M."/>
            <person name="Davis P."/>
            <person name="Dougan G."/>
            <person name="Feltwell T."/>
            <person name="Hamlin N."/>
            <person name="Holroyd S."/>
            <person name="Jagels K."/>
            <person name="Karlyshev A.V."/>
            <person name="Leather S."/>
            <person name="Moule S."/>
            <person name="Oyston P.C.F."/>
            <person name="Quail M.A."/>
            <person name="Rutherford K.M."/>
            <person name="Simmonds M."/>
            <person name="Skelton J."/>
            <person name="Stevens K."/>
            <person name="Whitehead S."/>
            <person name="Barrell B.G."/>
        </authorList>
    </citation>
    <scope>NUCLEOTIDE SEQUENCE [LARGE SCALE GENOMIC DNA]</scope>
    <source>
        <strain>CO-92 / Biovar Orientalis</strain>
    </source>
</reference>
<reference key="3">
    <citation type="journal article" date="2004" name="DNA Res.">
        <title>Complete genome sequence of Yersinia pestis strain 91001, an isolate avirulent to humans.</title>
        <authorList>
            <person name="Song Y."/>
            <person name="Tong Z."/>
            <person name="Wang J."/>
            <person name="Wang L."/>
            <person name="Guo Z."/>
            <person name="Han Y."/>
            <person name="Zhang J."/>
            <person name="Pei D."/>
            <person name="Zhou D."/>
            <person name="Qin H."/>
            <person name="Pang X."/>
            <person name="Han Y."/>
            <person name="Zhai J."/>
            <person name="Li M."/>
            <person name="Cui B."/>
            <person name="Qi Z."/>
            <person name="Jin L."/>
            <person name="Dai R."/>
            <person name="Chen F."/>
            <person name="Li S."/>
            <person name="Ye C."/>
            <person name="Du Z."/>
            <person name="Lin W."/>
            <person name="Wang J."/>
            <person name="Yu J."/>
            <person name="Yang H."/>
            <person name="Wang J."/>
            <person name="Huang P."/>
            <person name="Yang R."/>
        </authorList>
    </citation>
    <scope>NUCLEOTIDE SEQUENCE [LARGE SCALE GENOMIC DNA]</scope>
    <source>
        <strain>91001 / Biovar Mediaevalis</strain>
    </source>
</reference>
<feature type="chain" id="PRO_0000072370" description="Chaperone protein SycT">
    <location>
        <begin position="1"/>
        <end position="132"/>
    </location>
</feature>
<evidence type="ECO:0000250" key="1"/>
<accession>Q9ZGW6</accession>
<name>SYCT_YERPE</name>
<protein>
    <recommendedName>
        <fullName>Chaperone protein SycT</fullName>
    </recommendedName>
</protein>
<organism>
    <name type="scientific">Yersinia pestis</name>
    <dbReference type="NCBI Taxonomy" id="632"/>
    <lineage>
        <taxon>Bacteria</taxon>
        <taxon>Pseudomonadati</taxon>
        <taxon>Pseudomonadota</taxon>
        <taxon>Gammaproteobacteria</taxon>
        <taxon>Enterobacterales</taxon>
        <taxon>Yersiniaceae</taxon>
        <taxon>Yersinia</taxon>
    </lineage>
</organism>
<keyword id="KW-0143">Chaperone</keyword>
<keyword id="KW-0614">Plasmid</keyword>
<keyword id="KW-1185">Reference proteome</keyword>
<gene>
    <name type="primary">sycT</name>
    <name type="ordered locus">YPCD1.21</name>
    <name type="ordered locus">y5058</name>
    <name type="ordered locus">y0064</name>
    <name type="ordered locus">YP_pCD66</name>
</gene>
<proteinExistence type="inferred from homology"/>
<comment type="function">
    <text evidence="1">Functions as a specific chaperone for YopT.</text>
</comment>
<comment type="subunit">
    <text evidence="1">Binds to YopT.</text>
</comment>